<organism>
    <name type="scientific">Campylobacter jejuni (strain RM1221)</name>
    <dbReference type="NCBI Taxonomy" id="195099"/>
    <lineage>
        <taxon>Bacteria</taxon>
        <taxon>Pseudomonadati</taxon>
        <taxon>Campylobacterota</taxon>
        <taxon>Epsilonproteobacteria</taxon>
        <taxon>Campylobacterales</taxon>
        <taxon>Campylobacteraceae</taxon>
        <taxon>Campylobacter</taxon>
    </lineage>
</organism>
<keyword id="KW-0963">Cytoplasm</keyword>
<keyword id="KW-0648">Protein biosynthesis</keyword>
<keyword id="KW-0663">Pyridoxal phosphate</keyword>
<keyword id="KW-0711">Selenium</keyword>
<keyword id="KW-0808">Transferase</keyword>
<accession>Q5HT33</accession>
<reference key="1">
    <citation type="journal article" date="2005" name="PLoS Biol.">
        <title>Major structural differences and novel potential virulence mechanisms from the genomes of multiple Campylobacter species.</title>
        <authorList>
            <person name="Fouts D.E."/>
            <person name="Mongodin E.F."/>
            <person name="Mandrell R.E."/>
            <person name="Miller W.G."/>
            <person name="Rasko D.A."/>
            <person name="Ravel J."/>
            <person name="Brinkac L.M."/>
            <person name="DeBoy R.T."/>
            <person name="Parker C.T."/>
            <person name="Daugherty S.C."/>
            <person name="Dodson R.J."/>
            <person name="Durkin A.S."/>
            <person name="Madupu R."/>
            <person name="Sullivan S.A."/>
            <person name="Shetty J.U."/>
            <person name="Ayodeji M.A."/>
            <person name="Shvartsbeyn A."/>
            <person name="Schatz M.C."/>
            <person name="Badger J.H."/>
            <person name="Fraser C.M."/>
            <person name="Nelson K.E."/>
        </authorList>
    </citation>
    <scope>NUCLEOTIDE SEQUENCE [LARGE SCALE GENOMIC DNA]</scope>
    <source>
        <strain>RM1221</strain>
    </source>
</reference>
<evidence type="ECO:0000255" key="1">
    <source>
        <dbReference type="HAMAP-Rule" id="MF_00423"/>
    </source>
</evidence>
<dbReference type="EC" id="2.9.1.1" evidence="1"/>
<dbReference type="EMBL" id="CP000025">
    <property type="protein sequence ID" value="AAW36004.1"/>
    <property type="molecule type" value="Genomic_DNA"/>
</dbReference>
<dbReference type="RefSeq" id="WP_002867293.1">
    <property type="nucleotide sequence ID" value="NC_003912.7"/>
</dbReference>
<dbReference type="SMR" id="Q5HT33"/>
<dbReference type="KEGG" id="cjr:CJE1569"/>
<dbReference type="HOGENOM" id="CLU_038142_1_0_7"/>
<dbReference type="UniPathway" id="UPA00906">
    <property type="reaction ID" value="UER00896"/>
</dbReference>
<dbReference type="GO" id="GO:0005737">
    <property type="term" value="C:cytoplasm"/>
    <property type="evidence" value="ECO:0007669"/>
    <property type="project" value="UniProtKB-SubCell"/>
</dbReference>
<dbReference type="GO" id="GO:0004125">
    <property type="term" value="F:L-seryl-tRNA(Sec) selenium transferase activity"/>
    <property type="evidence" value="ECO:0007669"/>
    <property type="project" value="UniProtKB-UniRule"/>
</dbReference>
<dbReference type="GO" id="GO:0001717">
    <property type="term" value="P:conversion of seryl-tRNAsec to selenocys-tRNAsec"/>
    <property type="evidence" value="ECO:0007669"/>
    <property type="project" value="UniProtKB-UniRule"/>
</dbReference>
<dbReference type="GO" id="GO:0001514">
    <property type="term" value="P:selenocysteine incorporation"/>
    <property type="evidence" value="ECO:0007669"/>
    <property type="project" value="UniProtKB-UniRule"/>
</dbReference>
<dbReference type="Gene3D" id="3.90.1150.180">
    <property type="match status" value="1"/>
</dbReference>
<dbReference type="Gene3D" id="3.40.640.10">
    <property type="entry name" value="Type I PLP-dependent aspartate aminotransferase-like (Major domain)"/>
    <property type="match status" value="1"/>
</dbReference>
<dbReference type="HAMAP" id="MF_00423">
    <property type="entry name" value="SelA"/>
    <property type="match status" value="1"/>
</dbReference>
<dbReference type="InterPro" id="IPR015424">
    <property type="entry name" value="PyrdxlP-dep_Trfase"/>
</dbReference>
<dbReference type="InterPro" id="IPR015421">
    <property type="entry name" value="PyrdxlP-dep_Trfase_major"/>
</dbReference>
<dbReference type="InterPro" id="IPR018319">
    <property type="entry name" value="SelA-like"/>
</dbReference>
<dbReference type="InterPro" id="IPR004534">
    <property type="entry name" value="SelA_trans"/>
</dbReference>
<dbReference type="NCBIfam" id="TIGR00474">
    <property type="entry name" value="selA"/>
    <property type="match status" value="1"/>
</dbReference>
<dbReference type="PANTHER" id="PTHR32328">
    <property type="entry name" value="L-SERYL-TRNA(SEC) SELENIUM TRANSFERASE"/>
    <property type="match status" value="1"/>
</dbReference>
<dbReference type="PANTHER" id="PTHR32328:SF0">
    <property type="entry name" value="L-SERYL-TRNA(SEC) SELENIUM TRANSFERASE"/>
    <property type="match status" value="1"/>
</dbReference>
<dbReference type="Pfam" id="PF03841">
    <property type="entry name" value="SelA"/>
    <property type="match status" value="1"/>
</dbReference>
<dbReference type="SUPFAM" id="SSF53383">
    <property type="entry name" value="PLP-dependent transferases"/>
    <property type="match status" value="1"/>
</dbReference>
<sequence length="440" mass="50380">MNKFRTFPQINTLIEDESLKSYPFYIKVFFCKKVVAKLKENFSQDEISKDKLLLEIKKEIKTFYRKDLQSVINASGVVIHTNLGRSVIHEELYEACKDIICNYSNVEFDLENGKRGSRYALVLEKLKMLFECEDALVVNNNAAAVFLVLNSLCYDKEVISSRGELVEIGGSFRVPEVIKAAGVKLCEVGTSNKTHLKDYEQAIGENTALILKTHKSNFALMGFHSEVNIKDLHELAKEKGLLSYYDLGSGWCENLNEKLIKNEPKIKKLVQECDILSFSGDKLFGSAQAGIILGKKELIEKLKQNQLLRMLRVDKLTLSFLNESLKAYLQKDYKKIITLKLLNDDLSFIEKKALRVQKELNFQTQLKKSKSLVGGGSMPDKSLDTYILTFQGDALKLQTRFRKENIIGRIENDEFVLDFRTIRENELQKLILTINQMENL</sequence>
<feature type="chain" id="PRO_1000050359" description="L-seryl-tRNA(Sec) selenium transferase">
    <location>
        <begin position="1"/>
        <end position="440"/>
    </location>
</feature>
<feature type="modified residue" description="N6-(pyridoxal phosphate)lysine" evidence="1">
    <location>
        <position position="282"/>
    </location>
</feature>
<name>SELA_CAMJR</name>
<gene>
    <name evidence="1" type="primary">selA</name>
    <name type="ordered locus">CJE1569</name>
</gene>
<comment type="function">
    <text evidence="1">Converts seryl-tRNA(Sec) to selenocysteinyl-tRNA(Sec) required for selenoprotein biosynthesis.</text>
</comment>
<comment type="catalytic activity">
    <reaction evidence="1">
        <text>L-seryl-tRNA(Sec) + selenophosphate + H(+) = L-selenocysteinyl-tRNA(Sec) + phosphate</text>
        <dbReference type="Rhea" id="RHEA:22728"/>
        <dbReference type="Rhea" id="RHEA-COMP:9742"/>
        <dbReference type="Rhea" id="RHEA-COMP:9743"/>
        <dbReference type="ChEBI" id="CHEBI:15378"/>
        <dbReference type="ChEBI" id="CHEBI:16144"/>
        <dbReference type="ChEBI" id="CHEBI:43474"/>
        <dbReference type="ChEBI" id="CHEBI:78533"/>
        <dbReference type="ChEBI" id="CHEBI:78573"/>
        <dbReference type="EC" id="2.9.1.1"/>
    </reaction>
</comment>
<comment type="cofactor">
    <cofactor evidence="1">
        <name>pyridoxal 5'-phosphate</name>
        <dbReference type="ChEBI" id="CHEBI:597326"/>
    </cofactor>
</comment>
<comment type="pathway">
    <text evidence="1">Aminoacyl-tRNA biosynthesis; selenocysteinyl-tRNA(Sec) biosynthesis; selenocysteinyl-tRNA(Sec) from L-seryl-tRNA(Sec) (bacterial route): step 1/1.</text>
</comment>
<comment type="subcellular location">
    <subcellularLocation>
        <location evidence="1">Cytoplasm</location>
    </subcellularLocation>
</comment>
<comment type="similarity">
    <text evidence="1">Belongs to the SelA family.</text>
</comment>
<proteinExistence type="inferred from homology"/>
<protein>
    <recommendedName>
        <fullName evidence="1">L-seryl-tRNA(Sec) selenium transferase</fullName>
        <ecNumber evidence="1">2.9.1.1</ecNumber>
    </recommendedName>
    <alternativeName>
        <fullName evidence="1">Selenocysteine synthase</fullName>
        <shortName evidence="1">Sec synthase</shortName>
    </alternativeName>
    <alternativeName>
        <fullName evidence="1">Selenocysteinyl-tRNA(Sec) synthase</fullName>
    </alternativeName>
</protein>